<protein>
    <recommendedName>
        <fullName evidence="1">Small ribosomal subunit protein bS20</fullName>
    </recommendedName>
    <alternativeName>
        <fullName evidence="2">30S ribosomal protein S20</fullName>
    </alternativeName>
</protein>
<reference key="1">
    <citation type="journal article" date="2003" name="Proc. Natl. Acad. Sci. U.S.A.">
        <title>Complete genome sequence and analysis of Wolinella succinogenes.</title>
        <authorList>
            <person name="Baar C."/>
            <person name="Eppinger M."/>
            <person name="Raddatz G."/>
            <person name="Simon J."/>
            <person name="Lanz C."/>
            <person name="Klimmek O."/>
            <person name="Nandakumar R."/>
            <person name="Gross R."/>
            <person name="Rosinus A."/>
            <person name="Keller H."/>
            <person name="Jagtap P."/>
            <person name="Linke B."/>
            <person name="Meyer F."/>
            <person name="Lederer H."/>
            <person name="Schuster S.C."/>
        </authorList>
    </citation>
    <scope>NUCLEOTIDE SEQUENCE [LARGE SCALE GENOMIC DNA]</scope>
    <source>
        <strain>ATCC 29543 / DSM 1740 / CCUG 13145 / JCM 31913 / LMG 7466 / NCTC 11488 / FDC 602W</strain>
    </source>
</reference>
<sequence length="91" mass="10297">MANHKSAEKRIRQTLKRTERNRYYRTRIKNITKAVKEAVASNDATKAEEALKVANKDLHKFVSKGILPKNTAARKVSRLHASVKKLSAQIA</sequence>
<comment type="function">
    <text evidence="1">Binds directly to 16S ribosomal RNA.</text>
</comment>
<comment type="similarity">
    <text evidence="1">Belongs to the bacterial ribosomal protein bS20 family.</text>
</comment>
<name>RS20_WOLSU</name>
<proteinExistence type="inferred from homology"/>
<organism>
    <name type="scientific">Wolinella succinogenes (strain ATCC 29543 / DSM 1740 / CCUG 13145 / JCM 31913 / LMG 7466 / NCTC 11488 / FDC 602W)</name>
    <name type="common">Vibrio succinogenes</name>
    <dbReference type="NCBI Taxonomy" id="273121"/>
    <lineage>
        <taxon>Bacteria</taxon>
        <taxon>Pseudomonadati</taxon>
        <taxon>Campylobacterota</taxon>
        <taxon>Epsilonproteobacteria</taxon>
        <taxon>Campylobacterales</taxon>
        <taxon>Helicobacteraceae</taxon>
        <taxon>Wolinella</taxon>
    </lineage>
</organism>
<dbReference type="EMBL" id="BX571659">
    <property type="protein sequence ID" value="CAE09930.1"/>
    <property type="molecule type" value="Genomic_DNA"/>
</dbReference>
<dbReference type="RefSeq" id="WP_011138727.1">
    <property type="nucleotide sequence ID" value="NC_005090.1"/>
</dbReference>
<dbReference type="SMR" id="Q7M9M3"/>
<dbReference type="STRING" id="273121.WS0817"/>
<dbReference type="KEGG" id="wsu:WS0817"/>
<dbReference type="eggNOG" id="COG0268">
    <property type="taxonomic scope" value="Bacteria"/>
</dbReference>
<dbReference type="HOGENOM" id="CLU_160655_3_0_7"/>
<dbReference type="Proteomes" id="UP000000422">
    <property type="component" value="Chromosome"/>
</dbReference>
<dbReference type="GO" id="GO:0005829">
    <property type="term" value="C:cytosol"/>
    <property type="evidence" value="ECO:0007669"/>
    <property type="project" value="TreeGrafter"/>
</dbReference>
<dbReference type="GO" id="GO:0015935">
    <property type="term" value="C:small ribosomal subunit"/>
    <property type="evidence" value="ECO:0007669"/>
    <property type="project" value="TreeGrafter"/>
</dbReference>
<dbReference type="GO" id="GO:0070181">
    <property type="term" value="F:small ribosomal subunit rRNA binding"/>
    <property type="evidence" value="ECO:0007669"/>
    <property type="project" value="TreeGrafter"/>
</dbReference>
<dbReference type="GO" id="GO:0003735">
    <property type="term" value="F:structural constituent of ribosome"/>
    <property type="evidence" value="ECO:0007669"/>
    <property type="project" value="InterPro"/>
</dbReference>
<dbReference type="GO" id="GO:0006412">
    <property type="term" value="P:translation"/>
    <property type="evidence" value="ECO:0007669"/>
    <property type="project" value="UniProtKB-UniRule"/>
</dbReference>
<dbReference type="FunFam" id="1.20.58.110:FF:000001">
    <property type="entry name" value="30S ribosomal protein S20"/>
    <property type="match status" value="1"/>
</dbReference>
<dbReference type="Gene3D" id="1.20.58.110">
    <property type="entry name" value="Ribosomal protein S20"/>
    <property type="match status" value="1"/>
</dbReference>
<dbReference type="HAMAP" id="MF_00500">
    <property type="entry name" value="Ribosomal_bS20"/>
    <property type="match status" value="1"/>
</dbReference>
<dbReference type="InterPro" id="IPR002583">
    <property type="entry name" value="Ribosomal_bS20"/>
</dbReference>
<dbReference type="InterPro" id="IPR036510">
    <property type="entry name" value="Ribosomal_bS20_sf"/>
</dbReference>
<dbReference type="NCBIfam" id="TIGR00029">
    <property type="entry name" value="S20"/>
    <property type="match status" value="1"/>
</dbReference>
<dbReference type="PANTHER" id="PTHR33398">
    <property type="entry name" value="30S RIBOSOMAL PROTEIN S20"/>
    <property type="match status" value="1"/>
</dbReference>
<dbReference type="PANTHER" id="PTHR33398:SF1">
    <property type="entry name" value="SMALL RIBOSOMAL SUBUNIT PROTEIN BS20C"/>
    <property type="match status" value="1"/>
</dbReference>
<dbReference type="Pfam" id="PF01649">
    <property type="entry name" value="Ribosomal_S20p"/>
    <property type="match status" value="1"/>
</dbReference>
<dbReference type="SUPFAM" id="SSF46992">
    <property type="entry name" value="Ribosomal protein S20"/>
    <property type="match status" value="1"/>
</dbReference>
<feature type="chain" id="PRO_0000168062" description="Small ribosomal subunit protein bS20">
    <location>
        <begin position="1"/>
        <end position="91"/>
    </location>
</feature>
<keyword id="KW-1185">Reference proteome</keyword>
<keyword id="KW-0687">Ribonucleoprotein</keyword>
<keyword id="KW-0689">Ribosomal protein</keyword>
<keyword id="KW-0694">RNA-binding</keyword>
<keyword id="KW-0699">rRNA-binding</keyword>
<evidence type="ECO:0000255" key="1">
    <source>
        <dbReference type="HAMAP-Rule" id="MF_00500"/>
    </source>
</evidence>
<evidence type="ECO:0000305" key="2"/>
<gene>
    <name evidence="1" type="primary">rpsT</name>
    <name type="ordered locus">WS0817</name>
</gene>
<accession>Q7M9M3</accession>